<keyword id="KW-0963">Cytoplasm</keyword>
<keyword id="KW-0378">Hydrolase</keyword>
<keyword id="KW-0479">Metal-binding</keyword>
<keyword id="KW-0547">Nucleotide-binding</keyword>
<keyword id="KW-1185">Reference proteome</keyword>
<reference key="1">
    <citation type="journal article" date="2004" name="Nature">
        <title>Genome sequence of Silicibacter pomeroyi reveals adaptations to the marine environment.</title>
        <authorList>
            <person name="Moran M.A."/>
            <person name="Buchan A."/>
            <person name="Gonzalez J.M."/>
            <person name="Heidelberg J.F."/>
            <person name="Whitman W.B."/>
            <person name="Kiene R.P."/>
            <person name="Henriksen J.R."/>
            <person name="King G.M."/>
            <person name="Belas R."/>
            <person name="Fuqua C."/>
            <person name="Brinkac L.M."/>
            <person name="Lewis M."/>
            <person name="Johri S."/>
            <person name="Weaver B."/>
            <person name="Pai G."/>
            <person name="Eisen J.A."/>
            <person name="Rahe E."/>
            <person name="Sheldon W.M."/>
            <person name="Ye W."/>
            <person name="Miller T.R."/>
            <person name="Carlton J."/>
            <person name="Rasko D.A."/>
            <person name="Paulsen I.T."/>
            <person name="Ren Q."/>
            <person name="Daugherty S.C."/>
            <person name="DeBoy R.T."/>
            <person name="Dodson R.J."/>
            <person name="Durkin A.S."/>
            <person name="Madupu R."/>
            <person name="Nelson W.C."/>
            <person name="Sullivan S.A."/>
            <person name="Rosovitz M.J."/>
            <person name="Haft D.H."/>
            <person name="Selengut J."/>
            <person name="Ward N."/>
        </authorList>
    </citation>
    <scope>NUCLEOTIDE SEQUENCE [LARGE SCALE GENOMIC DNA]</scope>
    <source>
        <strain>ATCC 700808 / DSM 15171 / DSS-3</strain>
    </source>
</reference>
<reference key="2">
    <citation type="journal article" date="2014" name="Stand. Genomic Sci.">
        <title>An updated genome annotation for the model marine bacterium Ruegeria pomeroyi DSS-3.</title>
        <authorList>
            <person name="Rivers A.R."/>
            <person name="Smith C.B."/>
            <person name="Moran M.A."/>
        </authorList>
    </citation>
    <scope>GENOME REANNOTATION</scope>
    <source>
        <strain>ATCC 700808 / DSM 15171 / DSS-3</strain>
    </source>
</reference>
<protein>
    <recommendedName>
        <fullName evidence="1">5'-nucleotidase SurE</fullName>
        <ecNumber evidence="1">3.1.3.5</ecNumber>
    </recommendedName>
    <alternativeName>
        <fullName evidence="1">Nucleoside 5'-monophosphate phosphohydrolase</fullName>
    </alternativeName>
</protein>
<accession>Q5LQ08</accession>
<proteinExistence type="inferred from homology"/>
<organism>
    <name type="scientific">Ruegeria pomeroyi (strain ATCC 700808 / DSM 15171 / DSS-3)</name>
    <name type="common">Silicibacter pomeroyi</name>
    <dbReference type="NCBI Taxonomy" id="246200"/>
    <lineage>
        <taxon>Bacteria</taxon>
        <taxon>Pseudomonadati</taxon>
        <taxon>Pseudomonadota</taxon>
        <taxon>Alphaproteobacteria</taxon>
        <taxon>Rhodobacterales</taxon>
        <taxon>Roseobacteraceae</taxon>
        <taxon>Ruegeria</taxon>
    </lineage>
</organism>
<name>SURE_RUEPO</name>
<feature type="chain" id="PRO_0000235652" description="5'-nucleotidase SurE">
    <location>
        <begin position="1"/>
        <end position="260"/>
    </location>
</feature>
<feature type="binding site" evidence="1">
    <location>
        <position position="8"/>
    </location>
    <ligand>
        <name>a divalent metal cation</name>
        <dbReference type="ChEBI" id="CHEBI:60240"/>
    </ligand>
</feature>
<feature type="binding site" evidence="1">
    <location>
        <position position="9"/>
    </location>
    <ligand>
        <name>a divalent metal cation</name>
        <dbReference type="ChEBI" id="CHEBI:60240"/>
    </ligand>
</feature>
<feature type="binding site" evidence="1">
    <location>
        <position position="43"/>
    </location>
    <ligand>
        <name>a divalent metal cation</name>
        <dbReference type="ChEBI" id="CHEBI:60240"/>
    </ligand>
</feature>
<feature type="binding site" evidence="1">
    <location>
        <position position="96"/>
    </location>
    <ligand>
        <name>a divalent metal cation</name>
        <dbReference type="ChEBI" id="CHEBI:60240"/>
    </ligand>
</feature>
<sequence>MRILITNDDGINAPGLAALEQVALELAGPGGEVWTVAPAFEQSGVGHCISYTHPMLIARMGERRFAAEGSPADCVLAGLHDVMKDAPPDLVLSGVNRGNNSAENALYSGTLGGAMEAALQGLRAIALSQFFGPRNYGRTDPFEIAQSHGVQVIRRILDTWPQERPDYRLFYNVNFPPVPAAEVKGLRAVRQGFREGTRFSAEPHLSPSGKRFLWIKGGDQQQRTAPGTDAAANLDGYVSVTPMRADLTADDALEALQATL</sequence>
<comment type="function">
    <text evidence="1">Nucleotidase that shows phosphatase activity on nucleoside 5'-monophosphates.</text>
</comment>
<comment type="catalytic activity">
    <reaction evidence="1">
        <text>a ribonucleoside 5'-phosphate + H2O = a ribonucleoside + phosphate</text>
        <dbReference type="Rhea" id="RHEA:12484"/>
        <dbReference type="ChEBI" id="CHEBI:15377"/>
        <dbReference type="ChEBI" id="CHEBI:18254"/>
        <dbReference type="ChEBI" id="CHEBI:43474"/>
        <dbReference type="ChEBI" id="CHEBI:58043"/>
        <dbReference type="EC" id="3.1.3.5"/>
    </reaction>
</comment>
<comment type="cofactor">
    <cofactor evidence="1">
        <name>a divalent metal cation</name>
        <dbReference type="ChEBI" id="CHEBI:60240"/>
    </cofactor>
    <text evidence="1">Binds 1 divalent metal cation per subunit.</text>
</comment>
<comment type="subcellular location">
    <subcellularLocation>
        <location evidence="1">Cytoplasm</location>
    </subcellularLocation>
</comment>
<comment type="similarity">
    <text evidence="1">Belongs to the SurE nucleotidase family.</text>
</comment>
<evidence type="ECO:0000255" key="1">
    <source>
        <dbReference type="HAMAP-Rule" id="MF_00060"/>
    </source>
</evidence>
<dbReference type="EC" id="3.1.3.5" evidence="1"/>
<dbReference type="EMBL" id="CP000031">
    <property type="protein sequence ID" value="AAV95933.1"/>
    <property type="molecule type" value="Genomic_DNA"/>
</dbReference>
<dbReference type="RefSeq" id="WP_011048390.1">
    <property type="nucleotide sequence ID" value="NC_003911.12"/>
</dbReference>
<dbReference type="SMR" id="Q5LQ08"/>
<dbReference type="STRING" id="246200.SPO2688"/>
<dbReference type="PaxDb" id="246200-SPO2688"/>
<dbReference type="KEGG" id="sil:SPO2688"/>
<dbReference type="eggNOG" id="COG0496">
    <property type="taxonomic scope" value="Bacteria"/>
</dbReference>
<dbReference type="HOGENOM" id="CLU_045192_1_2_5"/>
<dbReference type="OrthoDB" id="9780815at2"/>
<dbReference type="Proteomes" id="UP000001023">
    <property type="component" value="Chromosome"/>
</dbReference>
<dbReference type="GO" id="GO:0005737">
    <property type="term" value="C:cytoplasm"/>
    <property type="evidence" value="ECO:0007669"/>
    <property type="project" value="UniProtKB-SubCell"/>
</dbReference>
<dbReference type="GO" id="GO:0008254">
    <property type="term" value="F:3'-nucleotidase activity"/>
    <property type="evidence" value="ECO:0007669"/>
    <property type="project" value="TreeGrafter"/>
</dbReference>
<dbReference type="GO" id="GO:0008253">
    <property type="term" value="F:5'-nucleotidase activity"/>
    <property type="evidence" value="ECO:0007669"/>
    <property type="project" value="UniProtKB-UniRule"/>
</dbReference>
<dbReference type="GO" id="GO:0004309">
    <property type="term" value="F:exopolyphosphatase activity"/>
    <property type="evidence" value="ECO:0007669"/>
    <property type="project" value="TreeGrafter"/>
</dbReference>
<dbReference type="GO" id="GO:0046872">
    <property type="term" value="F:metal ion binding"/>
    <property type="evidence" value="ECO:0007669"/>
    <property type="project" value="UniProtKB-UniRule"/>
</dbReference>
<dbReference type="GO" id="GO:0000166">
    <property type="term" value="F:nucleotide binding"/>
    <property type="evidence" value="ECO:0007669"/>
    <property type="project" value="UniProtKB-KW"/>
</dbReference>
<dbReference type="Gene3D" id="3.40.1210.10">
    <property type="entry name" value="Survival protein SurE-like phosphatase/nucleotidase"/>
    <property type="match status" value="1"/>
</dbReference>
<dbReference type="HAMAP" id="MF_00060">
    <property type="entry name" value="SurE"/>
    <property type="match status" value="1"/>
</dbReference>
<dbReference type="InterPro" id="IPR030048">
    <property type="entry name" value="SurE"/>
</dbReference>
<dbReference type="InterPro" id="IPR002828">
    <property type="entry name" value="SurE-like_Pase/nucleotidase"/>
</dbReference>
<dbReference type="InterPro" id="IPR036523">
    <property type="entry name" value="SurE-like_sf"/>
</dbReference>
<dbReference type="NCBIfam" id="NF001490">
    <property type="entry name" value="PRK00346.1-4"/>
    <property type="match status" value="1"/>
</dbReference>
<dbReference type="NCBIfam" id="NF010541">
    <property type="entry name" value="PRK13931.1"/>
    <property type="match status" value="1"/>
</dbReference>
<dbReference type="NCBIfam" id="TIGR00087">
    <property type="entry name" value="surE"/>
    <property type="match status" value="1"/>
</dbReference>
<dbReference type="PANTHER" id="PTHR30457">
    <property type="entry name" value="5'-NUCLEOTIDASE SURE"/>
    <property type="match status" value="1"/>
</dbReference>
<dbReference type="PANTHER" id="PTHR30457:SF12">
    <property type="entry name" value="5'_3'-NUCLEOTIDASE SURE"/>
    <property type="match status" value="1"/>
</dbReference>
<dbReference type="Pfam" id="PF01975">
    <property type="entry name" value="SurE"/>
    <property type="match status" value="1"/>
</dbReference>
<dbReference type="SUPFAM" id="SSF64167">
    <property type="entry name" value="SurE-like"/>
    <property type="match status" value="1"/>
</dbReference>
<gene>
    <name evidence="1" type="primary">surE</name>
    <name type="ordered locus">SPO2688</name>
</gene>